<name>RECO_DEHMB</name>
<dbReference type="EMBL" id="CP000688">
    <property type="protein sequence ID" value="ABQ17138.1"/>
    <property type="molecule type" value="Genomic_DNA"/>
</dbReference>
<dbReference type="SMR" id="A5FRN7"/>
<dbReference type="KEGG" id="deb:DehaBAV1_0553"/>
<dbReference type="PATRIC" id="fig|216389.18.peg.599"/>
<dbReference type="HOGENOM" id="CLU_066632_1_0_0"/>
<dbReference type="GO" id="GO:0043590">
    <property type="term" value="C:bacterial nucleoid"/>
    <property type="evidence" value="ECO:0007669"/>
    <property type="project" value="TreeGrafter"/>
</dbReference>
<dbReference type="GO" id="GO:0006310">
    <property type="term" value="P:DNA recombination"/>
    <property type="evidence" value="ECO:0007669"/>
    <property type="project" value="UniProtKB-UniRule"/>
</dbReference>
<dbReference type="GO" id="GO:0006302">
    <property type="term" value="P:double-strand break repair"/>
    <property type="evidence" value="ECO:0007669"/>
    <property type="project" value="TreeGrafter"/>
</dbReference>
<dbReference type="Gene3D" id="2.40.50.140">
    <property type="entry name" value="Nucleic acid-binding proteins"/>
    <property type="match status" value="1"/>
</dbReference>
<dbReference type="Gene3D" id="1.20.1440.120">
    <property type="entry name" value="Recombination protein O, C-terminal domain"/>
    <property type="match status" value="1"/>
</dbReference>
<dbReference type="HAMAP" id="MF_00201">
    <property type="entry name" value="RecO"/>
    <property type="match status" value="1"/>
</dbReference>
<dbReference type="InterPro" id="IPR037278">
    <property type="entry name" value="ARFGAP/RecO"/>
</dbReference>
<dbReference type="InterPro" id="IPR022572">
    <property type="entry name" value="DNA_rep/recomb_RecO_N"/>
</dbReference>
<dbReference type="InterPro" id="IPR012340">
    <property type="entry name" value="NA-bd_OB-fold"/>
</dbReference>
<dbReference type="InterPro" id="IPR003717">
    <property type="entry name" value="RecO"/>
</dbReference>
<dbReference type="InterPro" id="IPR042242">
    <property type="entry name" value="RecO_C"/>
</dbReference>
<dbReference type="NCBIfam" id="TIGR00613">
    <property type="entry name" value="reco"/>
    <property type="match status" value="1"/>
</dbReference>
<dbReference type="PANTHER" id="PTHR33991">
    <property type="entry name" value="DNA REPAIR PROTEIN RECO"/>
    <property type="match status" value="1"/>
</dbReference>
<dbReference type="PANTHER" id="PTHR33991:SF1">
    <property type="entry name" value="DNA REPAIR PROTEIN RECO"/>
    <property type="match status" value="1"/>
</dbReference>
<dbReference type="Pfam" id="PF02565">
    <property type="entry name" value="RecO_C"/>
    <property type="match status" value="1"/>
</dbReference>
<dbReference type="Pfam" id="PF11967">
    <property type="entry name" value="RecO_N"/>
    <property type="match status" value="1"/>
</dbReference>
<dbReference type="SUPFAM" id="SSF57863">
    <property type="entry name" value="ArfGap/RecO-like zinc finger"/>
    <property type="match status" value="1"/>
</dbReference>
<dbReference type="SUPFAM" id="SSF50249">
    <property type="entry name" value="Nucleic acid-binding proteins"/>
    <property type="match status" value="1"/>
</dbReference>
<sequence length="253" mass="28339">MTKPHDFKTKAIIVRKTKCGEADRILSLLTPDLGLIQGFAKSVRKTTSKLSGHLELLCYSEVSLARGKAIDTITGSQTIQSFLNIRNSLQLSAMAFYACELAYHFSPEEAANPALFQLLLSTLEELDNGSQPELCLKYFEINLLASSGYKPELRECANCHKKLQATINYYSPESGGVICPNCRNTQIGMPVSVNTVKVLRYIQENSFSSICRLKINREILSELELAIRANIRFVLEKEPKALFWLDSLRLADL</sequence>
<feature type="chain" id="PRO_1000077729" description="DNA repair protein RecO">
    <location>
        <begin position="1"/>
        <end position="253"/>
    </location>
</feature>
<evidence type="ECO:0000255" key="1">
    <source>
        <dbReference type="HAMAP-Rule" id="MF_00201"/>
    </source>
</evidence>
<protein>
    <recommendedName>
        <fullName evidence="1">DNA repair protein RecO</fullName>
    </recommendedName>
    <alternativeName>
        <fullName evidence="1">Recombination protein O</fullName>
    </alternativeName>
</protein>
<proteinExistence type="inferred from homology"/>
<gene>
    <name evidence="1" type="primary">recO</name>
    <name type="ordered locus">DehaBAV1_0553</name>
</gene>
<accession>A5FRN7</accession>
<keyword id="KW-0227">DNA damage</keyword>
<keyword id="KW-0233">DNA recombination</keyword>
<keyword id="KW-0234">DNA repair</keyword>
<reference key="1">
    <citation type="submission" date="2007-05" db="EMBL/GenBank/DDBJ databases">
        <title>Complete sequence of Dehalococcoides sp. BAV1.</title>
        <authorList>
            <consortium name="US DOE Joint Genome Institute"/>
            <person name="Copeland A."/>
            <person name="Lucas S."/>
            <person name="Lapidus A."/>
            <person name="Barry K."/>
            <person name="Detter J.C."/>
            <person name="Glavina del Rio T."/>
            <person name="Hammon N."/>
            <person name="Israni S."/>
            <person name="Pitluck S."/>
            <person name="Lowry S."/>
            <person name="Clum A."/>
            <person name="Schmutz J."/>
            <person name="Larimer F."/>
            <person name="Land M."/>
            <person name="Hauser L."/>
            <person name="Kyrpides N."/>
            <person name="Kim E."/>
            <person name="Ritalahti K.M."/>
            <person name="Loeffler F."/>
            <person name="Richardson P."/>
        </authorList>
    </citation>
    <scope>NUCLEOTIDE SEQUENCE [LARGE SCALE GENOMIC DNA]</scope>
    <source>
        <strain>ATCC BAA-2100 / JCM 16839 / KCTC 5957 / BAV1</strain>
    </source>
</reference>
<organism>
    <name type="scientific">Dehalococcoides mccartyi (strain ATCC BAA-2100 / JCM 16839 / KCTC 5957 / BAV1)</name>
    <dbReference type="NCBI Taxonomy" id="216389"/>
    <lineage>
        <taxon>Bacteria</taxon>
        <taxon>Bacillati</taxon>
        <taxon>Chloroflexota</taxon>
        <taxon>Dehalococcoidia</taxon>
        <taxon>Dehalococcoidales</taxon>
        <taxon>Dehalococcoidaceae</taxon>
        <taxon>Dehalococcoides</taxon>
    </lineage>
</organism>
<comment type="function">
    <text evidence="1">Involved in DNA repair and RecF pathway recombination.</text>
</comment>
<comment type="similarity">
    <text evidence="1">Belongs to the RecO family.</text>
</comment>